<sequence>MALRSLTLLCAAAGASAGAIELTPDNFDELVLKSGKAAFIKFLAPWUGHCKKMKPDWDSLASTFEDSKKVLIADVDCTTGGKPLCEKYGVRGYPTIKYFNPPDEEGEDYKGGRSLDELKKFAENELGPGCSVDLMDNCSEEQKGKLKEYIDMAPEKRTEMLETLKKELADAESTHEALLKELQATYKESMDKLEKLKEESAPKIKLLKAATPAPKAEGAKDEV</sequence>
<name>SEP2_EMIHU</name>
<reference evidence="5 6" key="1">
    <citation type="journal article" date="2005" name="J. Biol. Chem.">
        <title>A novel eukaryotic selenoprotein in the haptophyte alga Emiliania huxleyi.</title>
        <authorList>
            <person name="Obata T."/>
            <person name="Shiraiwa Y."/>
        </authorList>
    </citation>
    <scope>NUCLEOTIDE SEQUENCE [MRNA]</scope>
    <scope>PROTEIN SEQUENCE OF 18-38 AND 98-112</scope>
    <source>
        <strain>NIES-873</strain>
    </source>
</reference>
<protein>
    <recommendedName>
        <fullName>Protein disulfide-isomerase-like protein EhSep2</fullName>
    </recommendedName>
</protein>
<proteinExistence type="evidence at protein level"/>
<feature type="signal peptide" evidence="4">
    <location>
        <begin position="1"/>
        <end position="17"/>
    </location>
</feature>
<feature type="chain" id="PRO_0000248266" description="Protein disulfide-isomerase-like protein EhSep2" evidence="4">
    <location>
        <begin position="18"/>
        <end position="223"/>
    </location>
</feature>
<feature type="domain" description="Thioredoxin" evidence="2">
    <location>
        <begin position="18"/>
        <end position="125"/>
    </location>
</feature>
<feature type="region of interest" description="Disordered" evidence="3">
    <location>
        <begin position="201"/>
        <end position="223"/>
    </location>
</feature>
<feature type="coiled-coil region" evidence="1">
    <location>
        <begin position="155"/>
        <end position="201"/>
    </location>
</feature>
<feature type="short sequence motif" description="Prevents secretion from ER" evidence="1">
    <location>
        <begin position="220"/>
        <end position="223"/>
    </location>
</feature>
<feature type="compositionally biased region" description="Low complexity" evidence="3">
    <location>
        <begin position="203"/>
        <end position="216"/>
    </location>
</feature>
<feature type="non-standard amino acid" description="Selenocysteine" evidence="6">
    <location>
        <position position="47"/>
    </location>
</feature>
<feature type="sequence conflict" description="In Ref. 1; AA sequence." evidence="5" ref="1">
    <original>D</original>
    <variation>V</variation>
    <location>
        <position position="103"/>
    </location>
</feature>
<feature type="sequence conflict" description="In Ref. 1; AA sequence." evidence="5" ref="1">
    <original>ED</original>
    <variation>GA</variation>
    <location>
        <begin position="107"/>
        <end position="108"/>
    </location>
</feature>
<feature type="sequence conflict" description="In Ref. 1; AA sequence." evidence="5" ref="1">
    <original>GG</original>
    <variation>AL</variation>
    <location>
        <begin position="111"/>
        <end position="112"/>
    </location>
</feature>
<accession>Q50KB1</accession>
<evidence type="ECO:0000255" key="1"/>
<evidence type="ECO:0000255" key="2">
    <source>
        <dbReference type="PROSITE-ProRule" id="PRU00691"/>
    </source>
</evidence>
<evidence type="ECO:0000256" key="3">
    <source>
        <dbReference type="SAM" id="MobiDB-lite"/>
    </source>
</evidence>
<evidence type="ECO:0000269" key="4">
    <source>
    </source>
</evidence>
<evidence type="ECO:0000305" key="5"/>
<evidence type="ECO:0000312" key="6">
    <source>
        <dbReference type="EMBL" id="BAD98262.1"/>
    </source>
</evidence>
<gene>
    <name type="primary">SEP2</name>
</gene>
<organism>
    <name type="scientific">Emiliania huxleyi</name>
    <name type="common">Coccolithophore</name>
    <name type="synonym">Pontosphaera huxleyi</name>
    <dbReference type="NCBI Taxonomy" id="2903"/>
    <lineage>
        <taxon>Eukaryota</taxon>
        <taxon>Haptista</taxon>
        <taxon>Haptophyta</taxon>
        <taxon>Prymnesiophyceae</taxon>
        <taxon>Isochrysidales</taxon>
        <taxon>Noelaerhabdaceae</taxon>
        <taxon>Emiliania</taxon>
    </lineage>
</organism>
<keyword id="KW-0175">Coiled coil</keyword>
<keyword id="KW-0903">Direct protein sequencing</keyword>
<keyword id="KW-0256">Endoplasmic reticulum</keyword>
<keyword id="KW-0712">Selenocysteine</keyword>
<keyword id="KW-0732">Signal</keyword>
<dbReference type="EMBL" id="AB205027">
    <property type="protein sequence ID" value="BAD98262.1"/>
    <property type="molecule type" value="mRNA"/>
</dbReference>
<dbReference type="STRING" id="2903.Q50KB1"/>
<dbReference type="PaxDb" id="2903-EOD27297"/>
<dbReference type="eggNOG" id="KOG0191">
    <property type="taxonomic scope" value="Eukaryota"/>
</dbReference>
<dbReference type="GO" id="GO:0005783">
    <property type="term" value="C:endoplasmic reticulum"/>
    <property type="evidence" value="ECO:0000303"/>
    <property type="project" value="UniProtKB"/>
</dbReference>
<dbReference type="GO" id="GO:0005788">
    <property type="term" value="C:endoplasmic reticulum lumen"/>
    <property type="evidence" value="ECO:0007669"/>
    <property type="project" value="UniProtKB-SubCell"/>
</dbReference>
<dbReference type="GO" id="GO:0003756">
    <property type="term" value="F:protein disulfide isomerase activity"/>
    <property type="evidence" value="ECO:0000303"/>
    <property type="project" value="UniProtKB"/>
</dbReference>
<dbReference type="GO" id="GO:0006457">
    <property type="term" value="P:protein folding"/>
    <property type="evidence" value="ECO:0007669"/>
    <property type="project" value="TreeGrafter"/>
</dbReference>
<dbReference type="CDD" id="cd02998">
    <property type="entry name" value="PDI_a_ERp38"/>
    <property type="match status" value="1"/>
</dbReference>
<dbReference type="Gene3D" id="3.40.30.10">
    <property type="entry name" value="Glutaredoxin"/>
    <property type="match status" value="1"/>
</dbReference>
<dbReference type="InterPro" id="IPR051063">
    <property type="entry name" value="PDI"/>
</dbReference>
<dbReference type="InterPro" id="IPR005788">
    <property type="entry name" value="PDI_thioredoxin-like_dom"/>
</dbReference>
<dbReference type="InterPro" id="IPR036249">
    <property type="entry name" value="Thioredoxin-like_sf"/>
</dbReference>
<dbReference type="InterPro" id="IPR013766">
    <property type="entry name" value="Thioredoxin_domain"/>
</dbReference>
<dbReference type="NCBIfam" id="TIGR01126">
    <property type="entry name" value="pdi_dom"/>
    <property type="match status" value="1"/>
</dbReference>
<dbReference type="PANTHER" id="PTHR45672">
    <property type="entry name" value="PROTEIN DISULFIDE-ISOMERASE C17H9.14C-RELATED"/>
    <property type="match status" value="1"/>
</dbReference>
<dbReference type="PANTHER" id="PTHR45672:SF3">
    <property type="entry name" value="THIOREDOXIN DOMAIN-CONTAINING PROTEIN 5"/>
    <property type="match status" value="1"/>
</dbReference>
<dbReference type="Pfam" id="PF00085">
    <property type="entry name" value="Thioredoxin"/>
    <property type="match status" value="1"/>
</dbReference>
<dbReference type="SUPFAM" id="SSF52833">
    <property type="entry name" value="Thioredoxin-like"/>
    <property type="match status" value="1"/>
</dbReference>
<dbReference type="PROSITE" id="PS51352">
    <property type="entry name" value="THIOREDOXIN_2"/>
    <property type="match status" value="1"/>
</dbReference>
<comment type="subcellular location">
    <subcellularLocation>
        <location evidence="5">Endoplasmic reticulum lumen</location>
    </subcellularLocation>
</comment>
<comment type="similarity">
    <text evidence="1">Belongs to the protein disulfide isomerase family.</text>
</comment>
<comment type="caution">
    <text evidence="5">Contains a selenocysteine rather than a cysteine at one of the conserved active site positions so does not form the disulfide bond normally required for protein disulfide isomerase activity.</text>
</comment>